<keyword id="KW-0507">mRNA processing</keyword>
<keyword id="KW-0539">Nucleus</keyword>
<keyword id="KW-1185">Reference proteome</keyword>
<keyword id="KW-0804">Transcription</keyword>
<comment type="function">
    <text evidence="1">The spt4-spt5 complex mediates both activation and inhibition of transcription elongation, and plays a role in pre-mRNA processing. This complex seems to be important for the stability of the RNA polymerase II elongation machinery on the chromatin template but not for the inherent ability of this machinery to translocate down the gene (By similarity).</text>
</comment>
<comment type="subunit">
    <text evidence="1">Component of the spt4-spt5 complex. Interacts with RNA polymerase II (By similarity).</text>
</comment>
<comment type="subcellular location">
    <subcellularLocation>
        <location evidence="1">Nucleus</location>
    </subcellularLocation>
</comment>
<comment type="similarity">
    <text evidence="3">Belongs to the SPT5 family.</text>
</comment>
<proteinExistence type="inferred from homology"/>
<gene>
    <name type="primary">spt5</name>
    <name type="ORF">AFUA_4G08500</name>
</gene>
<dbReference type="EMBL" id="AAHF01000005">
    <property type="protein sequence ID" value="EAL89938.1"/>
    <property type="molecule type" value="Genomic_DNA"/>
</dbReference>
<dbReference type="RefSeq" id="XP_751976.1">
    <property type="nucleotide sequence ID" value="XM_746883.1"/>
</dbReference>
<dbReference type="SMR" id="Q4WP96"/>
<dbReference type="FunCoup" id="Q4WP96">
    <property type="interactions" value="1262"/>
</dbReference>
<dbReference type="STRING" id="330879.Q4WP96"/>
<dbReference type="EnsemblFungi" id="EAL89938">
    <property type="protein sequence ID" value="EAL89938"/>
    <property type="gene ID" value="AFUA_4G08500"/>
</dbReference>
<dbReference type="GeneID" id="3509235"/>
<dbReference type="KEGG" id="afm:AFUA_4G08500"/>
<dbReference type="VEuPathDB" id="FungiDB:Afu4g08500"/>
<dbReference type="eggNOG" id="KOG1999">
    <property type="taxonomic scope" value="Eukaryota"/>
</dbReference>
<dbReference type="HOGENOM" id="CLU_003537_1_1_1"/>
<dbReference type="InParanoid" id="Q4WP96"/>
<dbReference type="OMA" id="YPVGYMN"/>
<dbReference type="OrthoDB" id="28901at2759"/>
<dbReference type="Proteomes" id="UP000002530">
    <property type="component" value="Chromosome 4"/>
</dbReference>
<dbReference type="GO" id="GO:0032044">
    <property type="term" value="C:DSIF complex"/>
    <property type="evidence" value="ECO:0000318"/>
    <property type="project" value="GO_Central"/>
</dbReference>
<dbReference type="GO" id="GO:0140463">
    <property type="term" value="F:chromatin-protein adaptor activity"/>
    <property type="evidence" value="ECO:0007669"/>
    <property type="project" value="EnsemblFungi"/>
</dbReference>
<dbReference type="GO" id="GO:0003729">
    <property type="term" value="F:mRNA binding"/>
    <property type="evidence" value="ECO:0000318"/>
    <property type="project" value="GO_Central"/>
</dbReference>
<dbReference type="GO" id="GO:0003711">
    <property type="term" value="F:transcription elongation factor activity"/>
    <property type="evidence" value="ECO:0007669"/>
    <property type="project" value="EnsemblFungi"/>
</dbReference>
<dbReference type="GO" id="GO:0006397">
    <property type="term" value="P:mRNA processing"/>
    <property type="evidence" value="ECO:0007669"/>
    <property type="project" value="UniProtKB-KW"/>
</dbReference>
<dbReference type="GO" id="GO:0032784">
    <property type="term" value="P:regulation of DNA-templated transcription elongation"/>
    <property type="evidence" value="ECO:0007669"/>
    <property type="project" value="InterPro"/>
</dbReference>
<dbReference type="GO" id="GO:0006357">
    <property type="term" value="P:regulation of transcription by RNA polymerase II"/>
    <property type="evidence" value="ECO:0007669"/>
    <property type="project" value="InterPro"/>
</dbReference>
<dbReference type="GO" id="GO:0006368">
    <property type="term" value="P:transcription elongation by RNA polymerase II"/>
    <property type="evidence" value="ECO:0000318"/>
    <property type="project" value="GO_Central"/>
</dbReference>
<dbReference type="GO" id="GO:0140673">
    <property type="term" value="P:transcription elongation-coupled chromatin remodeling"/>
    <property type="evidence" value="ECO:0007669"/>
    <property type="project" value="InterPro"/>
</dbReference>
<dbReference type="CDD" id="cd06081">
    <property type="entry name" value="KOW_Spt5_1"/>
    <property type="match status" value="1"/>
</dbReference>
<dbReference type="CDD" id="cd06082">
    <property type="entry name" value="KOW_Spt5_2"/>
    <property type="match status" value="1"/>
</dbReference>
<dbReference type="CDD" id="cd06083">
    <property type="entry name" value="KOW_Spt5_3"/>
    <property type="match status" value="1"/>
</dbReference>
<dbReference type="CDD" id="cd06084">
    <property type="entry name" value="KOW_Spt5_4"/>
    <property type="match status" value="1"/>
</dbReference>
<dbReference type="CDD" id="cd06085">
    <property type="entry name" value="KOW_Spt5_5"/>
    <property type="match status" value="1"/>
</dbReference>
<dbReference type="CDD" id="cd09888">
    <property type="entry name" value="NGN_Euk"/>
    <property type="match status" value="1"/>
</dbReference>
<dbReference type="FunFam" id="2.30.30.30:FF:000018">
    <property type="entry name" value="Transcription elongation factor SPT5"/>
    <property type="match status" value="1"/>
</dbReference>
<dbReference type="FunFam" id="2.30.30.30:FF:000029">
    <property type="entry name" value="Transcription elongation factor SPT5"/>
    <property type="match status" value="1"/>
</dbReference>
<dbReference type="FunFam" id="2.30.30.30:FF:000054">
    <property type="entry name" value="Transcription elongation factor SPT5"/>
    <property type="match status" value="1"/>
</dbReference>
<dbReference type="FunFam" id="3.30.70.940:FF:000005">
    <property type="entry name" value="Transcription elongation factor SPT5"/>
    <property type="match status" value="1"/>
</dbReference>
<dbReference type="Gene3D" id="2.30.30.30">
    <property type="match status" value="4"/>
</dbReference>
<dbReference type="Gene3D" id="3.30.70.940">
    <property type="entry name" value="NusG, N-terminal domain"/>
    <property type="match status" value="1"/>
</dbReference>
<dbReference type="InterPro" id="IPR005824">
    <property type="entry name" value="KOW"/>
</dbReference>
<dbReference type="InterPro" id="IPR041973">
    <property type="entry name" value="KOW_Spt5_1"/>
</dbReference>
<dbReference type="InterPro" id="IPR041975">
    <property type="entry name" value="KOW_Spt5_2"/>
</dbReference>
<dbReference type="InterPro" id="IPR041976">
    <property type="entry name" value="KOW_Spt5_3"/>
</dbReference>
<dbReference type="InterPro" id="IPR041977">
    <property type="entry name" value="KOW_Spt5_4"/>
</dbReference>
<dbReference type="InterPro" id="IPR041978">
    <property type="entry name" value="KOW_Spt5_5"/>
</dbReference>
<dbReference type="InterPro" id="IPR005100">
    <property type="entry name" value="NGN-domain"/>
</dbReference>
<dbReference type="InterPro" id="IPR006645">
    <property type="entry name" value="NGN-like_dom"/>
</dbReference>
<dbReference type="InterPro" id="IPR036735">
    <property type="entry name" value="NGN_dom_sf"/>
</dbReference>
<dbReference type="InterPro" id="IPR039385">
    <property type="entry name" value="NGN_Euk"/>
</dbReference>
<dbReference type="InterPro" id="IPR014722">
    <property type="entry name" value="Rib_uL2_dom2"/>
</dbReference>
<dbReference type="InterPro" id="IPR039659">
    <property type="entry name" value="SPT5"/>
</dbReference>
<dbReference type="InterPro" id="IPR024945">
    <property type="entry name" value="Spt5_C_dom"/>
</dbReference>
<dbReference type="InterPro" id="IPR022581">
    <property type="entry name" value="Spt5_N"/>
</dbReference>
<dbReference type="InterPro" id="IPR017071">
    <property type="entry name" value="TF_Spt5_eukaryote"/>
</dbReference>
<dbReference type="InterPro" id="IPR008991">
    <property type="entry name" value="Translation_prot_SH3-like_sf"/>
</dbReference>
<dbReference type="PANTHER" id="PTHR11125">
    <property type="entry name" value="SUPPRESSOR OF TY 5"/>
    <property type="match status" value="1"/>
</dbReference>
<dbReference type="PANTHER" id="PTHR11125:SF7">
    <property type="entry name" value="TRANSCRIPTION ELONGATION FACTOR SPT5"/>
    <property type="match status" value="1"/>
</dbReference>
<dbReference type="Pfam" id="PF12815">
    <property type="entry name" value="CTD"/>
    <property type="match status" value="1"/>
</dbReference>
<dbReference type="Pfam" id="PF23042">
    <property type="entry name" value="KOW1_SPT5"/>
    <property type="match status" value="1"/>
</dbReference>
<dbReference type="Pfam" id="PF23284">
    <property type="entry name" value="KOW2_Spt5"/>
    <property type="match status" value="1"/>
</dbReference>
<dbReference type="Pfam" id="PF23291">
    <property type="entry name" value="KOW4_SPT5"/>
    <property type="match status" value="1"/>
</dbReference>
<dbReference type="Pfam" id="PF23290">
    <property type="entry name" value="KOW5_SPT5"/>
    <property type="match status" value="1"/>
</dbReference>
<dbReference type="Pfam" id="PF23037">
    <property type="entry name" value="KOWx_SPT5"/>
    <property type="match status" value="1"/>
</dbReference>
<dbReference type="Pfam" id="PF03439">
    <property type="entry name" value="Spt5-NGN"/>
    <property type="match status" value="1"/>
</dbReference>
<dbReference type="Pfam" id="PF11942">
    <property type="entry name" value="Spt5_N"/>
    <property type="match status" value="1"/>
</dbReference>
<dbReference type="PIRSF" id="PIRSF036945">
    <property type="entry name" value="Spt5"/>
    <property type="match status" value="1"/>
</dbReference>
<dbReference type="SMART" id="SM01104">
    <property type="entry name" value="CTD"/>
    <property type="match status" value="1"/>
</dbReference>
<dbReference type="SMART" id="SM00739">
    <property type="entry name" value="KOW"/>
    <property type="match status" value="5"/>
</dbReference>
<dbReference type="SMART" id="SM00738">
    <property type="entry name" value="NGN"/>
    <property type="match status" value="1"/>
</dbReference>
<dbReference type="SUPFAM" id="SSF50104">
    <property type="entry name" value="Translation proteins SH3-like domain"/>
    <property type="match status" value="1"/>
</dbReference>
<name>SPT5_ASPFU</name>
<organism>
    <name type="scientific">Aspergillus fumigatus (strain ATCC MYA-4609 / CBS 101355 / FGSC A1100 / Af293)</name>
    <name type="common">Neosartorya fumigata</name>
    <dbReference type="NCBI Taxonomy" id="330879"/>
    <lineage>
        <taxon>Eukaryota</taxon>
        <taxon>Fungi</taxon>
        <taxon>Dikarya</taxon>
        <taxon>Ascomycota</taxon>
        <taxon>Pezizomycotina</taxon>
        <taxon>Eurotiomycetes</taxon>
        <taxon>Eurotiomycetidae</taxon>
        <taxon>Eurotiales</taxon>
        <taxon>Aspergillaceae</taxon>
        <taxon>Aspergillus</taxon>
        <taxon>Aspergillus subgen. Fumigati</taxon>
    </lineage>
</organism>
<reference key="1">
    <citation type="journal article" date="2005" name="Nature">
        <title>Genomic sequence of the pathogenic and allergenic filamentous fungus Aspergillus fumigatus.</title>
        <authorList>
            <person name="Nierman W.C."/>
            <person name="Pain A."/>
            <person name="Anderson M.J."/>
            <person name="Wortman J.R."/>
            <person name="Kim H.S."/>
            <person name="Arroyo J."/>
            <person name="Berriman M."/>
            <person name="Abe K."/>
            <person name="Archer D.B."/>
            <person name="Bermejo C."/>
            <person name="Bennett J.W."/>
            <person name="Bowyer P."/>
            <person name="Chen D."/>
            <person name="Collins M."/>
            <person name="Coulsen R."/>
            <person name="Davies R."/>
            <person name="Dyer P.S."/>
            <person name="Farman M.L."/>
            <person name="Fedorova N."/>
            <person name="Fedorova N.D."/>
            <person name="Feldblyum T.V."/>
            <person name="Fischer R."/>
            <person name="Fosker N."/>
            <person name="Fraser A."/>
            <person name="Garcia J.L."/>
            <person name="Garcia M.J."/>
            <person name="Goble A."/>
            <person name="Goldman G.H."/>
            <person name="Gomi K."/>
            <person name="Griffith-Jones S."/>
            <person name="Gwilliam R."/>
            <person name="Haas B.J."/>
            <person name="Haas H."/>
            <person name="Harris D.E."/>
            <person name="Horiuchi H."/>
            <person name="Huang J."/>
            <person name="Humphray S."/>
            <person name="Jimenez J."/>
            <person name="Keller N."/>
            <person name="Khouri H."/>
            <person name="Kitamoto K."/>
            <person name="Kobayashi T."/>
            <person name="Konzack S."/>
            <person name="Kulkarni R."/>
            <person name="Kumagai T."/>
            <person name="Lafton A."/>
            <person name="Latge J.-P."/>
            <person name="Li W."/>
            <person name="Lord A."/>
            <person name="Lu C."/>
            <person name="Majoros W.H."/>
            <person name="May G.S."/>
            <person name="Miller B.L."/>
            <person name="Mohamoud Y."/>
            <person name="Molina M."/>
            <person name="Monod M."/>
            <person name="Mouyna I."/>
            <person name="Mulligan S."/>
            <person name="Murphy L.D."/>
            <person name="O'Neil S."/>
            <person name="Paulsen I."/>
            <person name="Penalva M.A."/>
            <person name="Pertea M."/>
            <person name="Price C."/>
            <person name="Pritchard B.L."/>
            <person name="Quail M.A."/>
            <person name="Rabbinowitsch E."/>
            <person name="Rawlins N."/>
            <person name="Rajandream M.A."/>
            <person name="Reichard U."/>
            <person name="Renauld H."/>
            <person name="Robson G.D."/>
            <person name="Rodriguez de Cordoba S."/>
            <person name="Rodriguez-Pena J.M."/>
            <person name="Ronning C.M."/>
            <person name="Rutter S."/>
            <person name="Salzberg S.L."/>
            <person name="Sanchez M."/>
            <person name="Sanchez-Ferrero J.C."/>
            <person name="Saunders D."/>
            <person name="Seeger K."/>
            <person name="Squares R."/>
            <person name="Squares S."/>
            <person name="Takeuchi M."/>
            <person name="Tekaia F."/>
            <person name="Turner G."/>
            <person name="Vazquez de Aldana C.R."/>
            <person name="Weidman J."/>
            <person name="White O."/>
            <person name="Woodward J.R."/>
            <person name="Yu J.-H."/>
            <person name="Fraser C.M."/>
            <person name="Galagan J.E."/>
            <person name="Asai K."/>
            <person name="Machida M."/>
            <person name="Hall N."/>
            <person name="Barrell B.G."/>
            <person name="Denning D.W."/>
        </authorList>
    </citation>
    <scope>NUCLEOTIDE SEQUENCE [LARGE SCALE GENOMIC DNA]</scope>
    <source>
        <strain>ATCC MYA-4609 / CBS 101355 / FGSC A1100 / Af293</strain>
    </source>
</reference>
<protein>
    <recommendedName>
        <fullName>Transcription elongation factor spt5</fullName>
    </recommendedName>
    <alternativeName>
        <fullName>Chromatin elongation factor spt5</fullName>
    </alternativeName>
</protein>
<evidence type="ECO:0000250" key="1"/>
<evidence type="ECO:0000256" key="2">
    <source>
        <dbReference type="SAM" id="MobiDB-lite"/>
    </source>
</evidence>
<evidence type="ECO:0000305" key="3"/>
<feature type="chain" id="PRO_0000238555" description="Transcription elongation factor spt5">
    <location>
        <begin position="1"/>
        <end position="1058"/>
    </location>
</feature>
<feature type="region of interest" description="Disordered" evidence="2">
    <location>
        <begin position="1"/>
        <end position="202"/>
    </location>
</feature>
<feature type="region of interest" description="Disordered" evidence="2">
    <location>
        <begin position="818"/>
        <end position="923"/>
    </location>
</feature>
<feature type="region of interest" description="Disordered" evidence="2">
    <location>
        <begin position="940"/>
        <end position="1058"/>
    </location>
</feature>
<feature type="compositionally biased region" description="Acidic residues" evidence="2">
    <location>
        <begin position="10"/>
        <end position="31"/>
    </location>
</feature>
<feature type="compositionally biased region" description="Basic and acidic residues" evidence="2">
    <location>
        <begin position="52"/>
        <end position="62"/>
    </location>
</feature>
<feature type="compositionally biased region" description="Acidic residues" evidence="2">
    <location>
        <begin position="63"/>
        <end position="125"/>
    </location>
</feature>
<feature type="compositionally biased region" description="Basic residues" evidence="2">
    <location>
        <begin position="130"/>
        <end position="139"/>
    </location>
</feature>
<feature type="compositionally biased region" description="Acidic residues" evidence="2">
    <location>
        <begin position="149"/>
        <end position="167"/>
    </location>
</feature>
<feature type="compositionally biased region" description="Basic and acidic residues" evidence="2">
    <location>
        <begin position="185"/>
        <end position="202"/>
    </location>
</feature>
<feature type="compositionally biased region" description="Low complexity" evidence="2">
    <location>
        <begin position="975"/>
        <end position="998"/>
    </location>
</feature>
<feature type="compositionally biased region" description="Low complexity" evidence="2">
    <location>
        <begin position="1023"/>
        <end position="1038"/>
    </location>
</feature>
<feature type="compositionally biased region" description="Basic and acidic residues" evidence="2">
    <location>
        <begin position="1047"/>
        <end position="1058"/>
    </location>
</feature>
<sequence>MSRNFLNEDFGSEEEDDDFNPAPAEDSDEEDVKPQSTSRGRINEEEEDDDHADVKPERADREGSEDDVKEDIDADEADAGGERDEGEDEEEGENDEDDEDDEEEGEEEEEDEDDEDEDEDEDEQDVSSGRPRKRRKRLGGVHNFIDTEAGVDEEEDEAEDEEDEMEFGAEMHPDDLDALPAGADTDDRRHRQLDRQRELEASMDAEKQAQLLKERYGRNRAAATDAVVVPKRLLLPSVDDPSIWGVRCKAGKEREVVFAIQKRIEERPPGSRKPIRIISAFERGGAMSGYIYVEARRQADVMEALEDMSNVYPRTKMILVPVREMPDLLRVQKSEELNPGGWVRIKRGKYQGDLAQIEEVDTNGLDVTVRLVPRLDYGLNEDSGAPVVDIKRKRPGMASGGPRPPQRLFSEAEAKKRHGKYLSATSGLGGKSWSYLGETYIDGFLIKDMKVQHLITKNVNPRLEEVTMFARGSDDGTSNLDLASLAETLKNSTAEESYLPGDPVEVFRGEQQGLVGRTTSTRGDIVTLQVTEGELAGQMIEAPVKSLRKRFREGDHVKVIGGSRYQDELGMVVQVKDDTVTLLSDMSMQEITVFSKDLRLSAETGVDGKLGMFDVHDLVQLDASTVACVVKVDRESLRVLDQNGSIRTVLPSQIANKITPRRDAVATDRNGAEIRIGDTVRELYGDQRSGVILHIYRSFLFLHNKAQAENSGIVVVRTTNVVTVSAKGGRSTGPDLTKMNPALMRSGIPGASMGPPKSFGHDRLIGKTVQVRKGPYKGLVGIVKDSTDVQARVELHSRNKLVTIPKDVLIVKDPVTGQTLDMSRKGGQRVPYGASAAPPSGWSGGRTPMAAADSSRTPAWGGASSARTPAWAGISGSRTPAWKMDGSRTSNPYDGSRTAYGGAGSRTPAWNAGARTPYDSGSGSSGFDAFAAGSRTPAWGGANAGGRTPAWSASSSAGSGNRDSRGYDAPNPGGAYSAPTPGAYTAPTPGASAPTPGAWADSAPTPGVFNAPTPGGLSGRPYDAPTPAMGGAAATPGAGAYGDGEDGGPRYDEGTPSP</sequence>
<accession>Q4WP96</accession>